<reference key="1">
    <citation type="journal article" date="2005" name="Science">
        <title>The transcriptional landscape of the mammalian genome.</title>
        <authorList>
            <person name="Carninci P."/>
            <person name="Kasukawa T."/>
            <person name="Katayama S."/>
            <person name="Gough J."/>
            <person name="Frith M.C."/>
            <person name="Maeda N."/>
            <person name="Oyama R."/>
            <person name="Ravasi T."/>
            <person name="Lenhard B."/>
            <person name="Wells C."/>
            <person name="Kodzius R."/>
            <person name="Shimokawa K."/>
            <person name="Bajic V.B."/>
            <person name="Brenner S.E."/>
            <person name="Batalov S."/>
            <person name="Forrest A.R."/>
            <person name="Zavolan M."/>
            <person name="Davis M.J."/>
            <person name="Wilming L.G."/>
            <person name="Aidinis V."/>
            <person name="Allen J.E."/>
            <person name="Ambesi-Impiombato A."/>
            <person name="Apweiler R."/>
            <person name="Aturaliya R.N."/>
            <person name="Bailey T.L."/>
            <person name="Bansal M."/>
            <person name="Baxter L."/>
            <person name="Beisel K.W."/>
            <person name="Bersano T."/>
            <person name="Bono H."/>
            <person name="Chalk A.M."/>
            <person name="Chiu K.P."/>
            <person name="Choudhary V."/>
            <person name="Christoffels A."/>
            <person name="Clutterbuck D.R."/>
            <person name="Crowe M.L."/>
            <person name="Dalla E."/>
            <person name="Dalrymple B.P."/>
            <person name="de Bono B."/>
            <person name="Della Gatta G."/>
            <person name="di Bernardo D."/>
            <person name="Down T."/>
            <person name="Engstrom P."/>
            <person name="Fagiolini M."/>
            <person name="Faulkner G."/>
            <person name="Fletcher C.F."/>
            <person name="Fukushima T."/>
            <person name="Furuno M."/>
            <person name="Futaki S."/>
            <person name="Gariboldi M."/>
            <person name="Georgii-Hemming P."/>
            <person name="Gingeras T.R."/>
            <person name="Gojobori T."/>
            <person name="Green R.E."/>
            <person name="Gustincich S."/>
            <person name="Harbers M."/>
            <person name="Hayashi Y."/>
            <person name="Hensch T.K."/>
            <person name="Hirokawa N."/>
            <person name="Hill D."/>
            <person name="Huminiecki L."/>
            <person name="Iacono M."/>
            <person name="Ikeo K."/>
            <person name="Iwama A."/>
            <person name="Ishikawa T."/>
            <person name="Jakt M."/>
            <person name="Kanapin A."/>
            <person name="Katoh M."/>
            <person name="Kawasawa Y."/>
            <person name="Kelso J."/>
            <person name="Kitamura H."/>
            <person name="Kitano H."/>
            <person name="Kollias G."/>
            <person name="Krishnan S.P."/>
            <person name="Kruger A."/>
            <person name="Kummerfeld S.K."/>
            <person name="Kurochkin I.V."/>
            <person name="Lareau L.F."/>
            <person name="Lazarevic D."/>
            <person name="Lipovich L."/>
            <person name="Liu J."/>
            <person name="Liuni S."/>
            <person name="McWilliam S."/>
            <person name="Madan Babu M."/>
            <person name="Madera M."/>
            <person name="Marchionni L."/>
            <person name="Matsuda H."/>
            <person name="Matsuzawa S."/>
            <person name="Miki H."/>
            <person name="Mignone F."/>
            <person name="Miyake S."/>
            <person name="Morris K."/>
            <person name="Mottagui-Tabar S."/>
            <person name="Mulder N."/>
            <person name="Nakano N."/>
            <person name="Nakauchi H."/>
            <person name="Ng P."/>
            <person name="Nilsson R."/>
            <person name="Nishiguchi S."/>
            <person name="Nishikawa S."/>
            <person name="Nori F."/>
            <person name="Ohara O."/>
            <person name="Okazaki Y."/>
            <person name="Orlando V."/>
            <person name="Pang K.C."/>
            <person name="Pavan W.J."/>
            <person name="Pavesi G."/>
            <person name="Pesole G."/>
            <person name="Petrovsky N."/>
            <person name="Piazza S."/>
            <person name="Reed J."/>
            <person name="Reid J.F."/>
            <person name="Ring B.Z."/>
            <person name="Ringwald M."/>
            <person name="Rost B."/>
            <person name="Ruan Y."/>
            <person name="Salzberg S.L."/>
            <person name="Sandelin A."/>
            <person name="Schneider C."/>
            <person name="Schoenbach C."/>
            <person name="Sekiguchi K."/>
            <person name="Semple C.A."/>
            <person name="Seno S."/>
            <person name="Sessa L."/>
            <person name="Sheng Y."/>
            <person name="Shibata Y."/>
            <person name="Shimada H."/>
            <person name="Shimada K."/>
            <person name="Silva D."/>
            <person name="Sinclair B."/>
            <person name="Sperling S."/>
            <person name="Stupka E."/>
            <person name="Sugiura K."/>
            <person name="Sultana R."/>
            <person name="Takenaka Y."/>
            <person name="Taki K."/>
            <person name="Tammoja K."/>
            <person name="Tan S.L."/>
            <person name="Tang S."/>
            <person name="Taylor M.S."/>
            <person name="Tegner J."/>
            <person name="Teichmann S.A."/>
            <person name="Ueda H.R."/>
            <person name="van Nimwegen E."/>
            <person name="Verardo R."/>
            <person name="Wei C.L."/>
            <person name="Yagi K."/>
            <person name="Yamanishi H."/>
            <person name="Zabarovsky E."/>
            <person name="Zhu S."/>
            <person name="Zimmer A."/>
            <person name="Hide W."/>
            <person name="Bult C."/>
            <person name="Grimmond S.M."/>
            <person name="Teasdale R.D."/>
            <person name="Liu E.T."/>
            <person name="Brusic V."/>
            <person name="Quackenbush J."/>
            <person name="Wahlestedt C."/>
            <person name="Mattick J.S."/>
            <person name="Hume D.A."/>
            <person name="Kai C."/>
            <person name="Sasaki D."/>
            <person name="Tomaru Y."/>
            <person name="Fukuda S."/>
            <person name="Kanamori-Katayama M."/>
            <person name="Suzuki M."/>
            <person name="Aoki J."/>
            <person name="Arakawa T."/>
            <person name="Iida J."/>
            <person name="Imamura K."/>
            <person name="Itoh M."/>
            <person name="Kato T."/>
            <person name="Kawaji H."/>
            <person name="Kawagashira N."/>
            <person name="Kawashima T."/>
            <person name="Kojima M."/>
            <person name="Kondo S."/>
            <person name="Konno H."/>
            <person name="Nakano K."/>
            <person name="Ninomiya N."/>
            <person name="Nishio T."/>
            <person name="Okada M."/>
            <person name="Plessy C."/>
            <person name="Shibata K."/>
            <person name="Shiraki T."/>
            <person name="Suzuki S."/>
            <person name="Tagami M."/>
            <person name="Waki K."/>
            <person name="Watahiki A."/>
            <person name="Okamura-Oho Y."/>
            <person name="Suzuki H."/>
            <person name="Kawai J."/>
            <person name="Hayashizaki Y."/>
        </authorList>
    </citation>
    <scope>NUCLEOTIDE SEQUENCE [LARGE SCALE MRNA]</scope>
    <source>
        <strain>C57BL/6J</strain>
        <tissue>Small intestine</tissue>
    </source>
</reference>
<reference key="2">
    <citation type="journal article" date="2004" name="Genome Res.">
        <title>The status, quality, and expansion of the NIH full-length cDNA project: the Mammalian Gene Collection (MGC).</title>
        <authorList>
            <consortium name="The MGC Project Team"/>
        </authorList>
    </citation>
    <scope>NUCLEOTIDE SEQUENCE [LARGE SCALE MRNA]</scope>
    <source>
        <strain>FVB/N</strain>
        <tissue>Colon</tissue>
    </source>
</reference>
<reference key="3">
    <citation type="journal article" date="2010" name="Cell">
        <title>A tissue-specific atlas of mouse protein phosphorylation and expression.</title>
        <authorList>
            <person name="Huttlin E.L."/>
            <person name="Jedrychowski M.P."/>
            <person name="Elias J.E."/>
            <person name="Goswami T."/>
            <person name="Rad R."/>
            <person name="Beausoleil S.A."/>
            <person name="Villen J."/>
            <person name="Haas W."/>
            <person name="Sowa M.E."/>
            <person name="Gygi S.P."/>
        </authorList>
    </citation>
    <scope>PHOSPHORYLATION [LARGE SCALE ANALYSIS] AT SER-433 AND SER-437</scope>
    <scope>IDENTIFICATION BY MASS SPECTROMETRY [LARGE SCALE ANALYSIS]</scope>
    <source>
        <tissue>Spleen</tissue>
    </source>
</reference>
<keyword id="KW-0067">ATP-binding</keyword>
<keyword id="KW-0963">Cytoplasm</keyword>
<keyword id="KW-0418">Kinase</keyword>
<keyword id="KW-0460">Magnesium</keyword>
<keyword id="KW-0479">Metal-binding</keyword>
<keyword id="KW-0547">Nucleotide-binding</keyword>
<keyword id="KW-0597">Phosphoprotein</keyword>
<keyword id="KW-1185">Reference proteome</keyword>
<keyword id="KW-0690">Ribosome biogenesis</keyword>
<keyword id="KW-0723">Serine/threonine-protein kinase</keyword>
<keyword id="KW-0808">Transferase</keyword>
<organism>
    <name type="scientific">Mus musculus</name>
    <name type="common">Mouse</name>
    <dbReference type="NCBI Taxonomy" id="10090"/>
    <lineage>
        <taxon>Eukaryota</taxon>
        <taxon>Metazoa</taxon>
        <taxon>Chordata</taxon>
        <taxon>Craniata</taxon>
        <taxon>Vertebrata</taxon>
        <taxon>Euteleostomi</taxon>
        <taxon>Mammalia</taxon>
        <taxon>Eutheria</taxon>
        <taxon>Euarchontoglires</taxon>
        <taxon>Glires</taxon>
        <taxon>Rodentia</taxon>
        <taxon>Myomorpha</taxon>
        <taxon>Muroidea</taxon>
        <taxon>Muridae</taxon>
        <taxon>Murinae</taxon>
        <taxon>Mus</taxon>
        <taxon>Mus</taxon>
    </lineage>
</organism>
<feature type="chain" id="PRO_0000213528" description="Serine/threonine-protein kinase RIO2">
    <location>
        <begin position="1"/>
        <end position="547"/>
    </location>
</feature>
<feature type="domain" description="Protein kinase" evidence="4">
    <location>
        <begin position="97"/>
        <end position="273"/>
    </location>
</feature>
<feature type="region of interest" description="Disordered" evidence="3">
    <location>
        <begin position="352"/>
        <end position="385"/>
    </location>
</feature>
<feature type="region of interest" description="Disordered" evidence="3">
    <location>
        <begin position="404"/>
        <end position="445"/>
    </location>
</feature>
<feature type="short sequence motif" description="Nuclear export signal" evidence="2">
    <location>
        <begin position="399"/>
        <end position="408"/>
    </location>
</feature>
<feature type="active site" description="Proton acceptor" evidence="1">
    <location>
        <position position="228"/>
    </location>
</feature>
<feature type="binding site" evidence="1">
    <location>
        <position position="123"/>
    </location>
    <ligand>
        <name>ATP</name>
        <dbReference type="ChEBI" id="CHEBI:30616"/>
    </ligand>
</feature>
<feature type="modified residue" description="Phosphoserine" evidence="2">
    <location>
        <position position="332"/>
    </location>
</feature>
<feature type="modified residue" description="Phosphoserine" evidence="2">
    <location>
        <position position="337"/>
    </location>
</feature>
<feature type="modified residue" description="Phosphoserine" evidence="2">
    <location>
        <position position="350"/>
    </location>
</feature>
<feature type="modified residue" description="Phosphoserine" evidence="2">
    <location>
        <position position="362"/>
    </location>
</feature>
<feature type="modified residue" description="Phosphoserine" evidence="2">
    <location>
        <position position="385"/>
    </location>
</feature>
<feature type="modified residue" description="Phosphoserine" evidence="2">
    <location>
        <position position="390"/>
    </location>
</feature>
<feature type="modified residue" description="Phosphoserine" evidence="2">
    <location>
        <position position="412"/>
    </location>
</feature>
<feature type="modified residue" description="Phosphoserine" evidence="2">
    <location>
        <position position="417"/>
    </location>
</feature>
<feature type="modified residue" description="Phosphoserine" evidence="5">
    <location>
        <position position="433"/>
    </location>
</feature>
<feature type="modified residue" description="Phosphoserine" evidence="5">
    <location>
        <position position="437"/>
    </location>
</feature>
<feature type="modified residue" description="Phosphoserine" evidence="2">
    <location>
        <position position="543"/>
    </location>
</feature>
<feature type="sequence conflict" description="In Ref. 2; AAH10781." evidence="4" ref="2">
    <original>S</original>
    <variation>L</variation>
    <location>
        <position position="369"/>
    </location>
</feature>
<feature type="sequence conflict" description="In Ref. 2; AAH10781." evidence="4" ref="2">
    <original>GG</original>
    <variation>DS</variation>
    <location>
        <begin position="379"/>
        <end position="380"/>
    </location>
</feature>
<feature type="sequence conflict" description="In Ref. 2; AAH10781." evidence="4" ref="2">
    <original>E</original>
    <variation>D</variation>
    <location>
        <position position="402"/>
    </location>
</feature>
<evidence type="ECO:0000250" key="1"/>
<evidence type="ECO:0000250" key="2">
    <source>
        <dbReference type="UniProtKB" id="Q9BVS4"/>
    </source>
</evidence>
<evidence type="ECO:0000256" key="3">
    <source>
        <dbReference type="SAM" id="MobiDB-lite"/>
    </source>
</evidence>
<evidence type="ECO:0000305" key="4"/>
<evidence type="ECO:0007744" key="5">
    <source>
    </source>
</evidence>
<sequence length="547" mass="62490">MGKVNVAKLRYMSRDDFRVLTAVEMGMKNHEIVPCSLIASIASLKHGGCNKILRELVKHKLIAWERTKTVQGYRLTNAGYDYLALKTLSSRQVVESVGNQMGVGKESDIYIVANEAGQQLALKLHRLGRTSFRNLKNKRDYHKHRHNVSWLYLSRLSAMKEFAYMKALYERKFPVPKPIDYNRHAVIMELINGYPLCQIHHVEDPASVYDEAMELIVKLGNHGLIHGDFNEFNLMLDKDDHITMIDFPQMVSTSHPNAEWYFDRDVKCIREFFMKRFSYESELYPTFSDIRKEDSLDVEVSASGYTKEMQADDELLHPVGPDDKITETEEDSDFTFSDEEMLEKAKVWRSELEKEADPADESGGSWCCSSTDSKQIKDGGLPEESAHVSSFEVTALSQAVEEMERQVLPHRSVTEFSEESRRTENDGQPGQRSPAGSEDCDDEPPHLIALSSVNREFRPFRDEESMSSVTRHRTRTLSVTSAGSALSCSTIPPELVKQKVKRQLTRQQKAAARRRLQKGEANVFTKQRRENMQNIKSSLEAASFWGD</sequence>
<protein>
    <recommendedName>
        <fullName>Serine/threonine-protein kinase RIO2</fullName>
        <ecNumber evidence="2">2.7.11.1</ecNumber>
    </recommendedName>
    <alternativeName>
        <fullName>RIO kinase 2</fullName>
    </alternativeName>
</protein>
<gene>
    <name type="primary">Riok2</name>
</gene>
<name>RIOK2_MOUSE</name>
<comment type="function">
    <text evidence="2">Serine/threonine-protein kinase involved in the final steps of cytoplasmic maturation of the 40S ribosomal subunit. Involved in export of the 40S pre-ribosome particles (pre-40S) from the nucleus to the cytoplasm. Its kinase activity is required for the release of NOB1, PNO1 and LTV1 from the late pre-40S and the processing of 18S-E pre-rRNA to the mature 18S rRNA. May regulate the timing of the metaphase-anaphase transition during mitotic progression, and its phosphorylation, may regulate this function.</text>
</comment>
<comment type="catalytic activity">
    <reaction evidence="2">
        <text>L-seryl-[protein] + ATP = O-phospho-L-seryl-[protein] + ADP + H(+)</text>
        <dbReference type="Rhea" id="RHEA:17989"/>
        <dbReference type="Rhea" id="RHEA-COMP:9863"/>
        <dbReference type="Rhea" id="RHEA-COMP:11604"/>
        <dbReference type="ChEBI" id="CHEBI:15378"/>
        <dbReference type="ChEBI" id="CHEBI:29999"/>
        <dbReference type="ChEBI" id="CHEBI:30616"/>
        <dbReference type="ChEBI" id="CHEBI:83421"/>
        <dbReference type="ChEBI" id="CHEBI:456216"/>
        <dbReference type="EC" id="2.7.11.1"/>
    </reaction>
</comment>
<comment type="catalytic activity">
    <reaction evidence="2">
        <text>L-threonyl-[protein] + ATP = O-phospho-L-threonyl-[protein] + ADP + H(+)</text>
        <dbReference type="Rhea" id="RHEA:46608"/>
        <dbReference type="Rhea" id="RHEA-COMP:11060"/>
        <dbReference type="Rhea" id="RHEA-COMP:11605"/>
        <dbReference type="ChEBI" id="CHEBI:15378"/>
        <dbReference type="ChEBI" id="CHEBI:30013"/>
        <dbReference type="ChEBI" id="CHEBI:30616"/>
        <dbReference type="ChEBI" id="CHEBI:61977"/>
        <dbReference type="ChEBI" id="CHEBI:456216"/>
        <dbReference type="EC" id="2.7.11.1"/>
    </reaction>
</comment>
<comment type="cofactor">
    <cofactor evidence="4">
        <name>Mg(2+)</name>
        <dbReference type="ChEBI" id="CHEBI:18420"/>
    </cofactor>
</comment>
<comment type="subunit">
    <text evidence="2">Associated with late 40S pre-ribosomal particles. Interacts with PLK1 (via its N-terminus).</text>
</comment>
<comment type="subcellular location">
    <subcellularLocation>
        <location evidence="2">Cytoplasm</location>
    </subcellularLocation>
</comment>
<comment type="PTM">
    <text evidence="2">Autophosphorylated (in vitro). Phosphorylation affects the timing of the metaphase-anaphase transition.</text>
</comment>
<comment type="similarity">
    <text evidence="4">Belongs to the protein kinase superfamily. RIO-type Ser/Thr kinase family.</text>
</comment>
<accession>Q9CQS5</accession>
<accession>Q91XF3</accession>
<dbReference type="EC" id="2.7.11.1" evidence="2"/>
<dbReference type="EMBL" id="AK008385">
    <property type="protein sequence ID" value="BAB25639.1"/>
    <property type="molecule type" value="mRNA"/>
</dbReference>
<dbReference type="EMBL" id="AK008451">
    <property type="protein sequence ID" value="BAB25676.1"/>
    <property type="molecule type" value="mRNA"/>
</dbReference>
<dbReference type="EMBL" id="AK049232">
    <property type="protein sequence ID" value="BAC33625.1"/>
    <property type="molecule type" value="mRNA"/>
</dbReference>
<dbReference type="EMBL" id="BC010781">
    <property type="protein sequence ID" value="AAH10781.1"/>
    <property type="molecule type" value="mRNA"/>
</dbReference>
<dbReference type="CCDS" id="CCDS28417.1"/>
<dbReference type="RefSeq" id="NP_080210.1">
    <property type="nucleotide sequence ID" value="NM_025934.2"/>
</dbReference>
<dbReference type="SMR" id="Q9CQS5"/>
<dbReference type="BioGRID" id="211899">
    <property type="interactions" value="4"/>
</dbReference>
<dbReference type="FunCoup" id="Q9CQS5">
    <property type="interactions" value="4464"/>
</dbReference>
<dbReference type="IntAct" id="Q9CQS5">
    <property type="interactions" value="3"/>
</dbReference>
<dbReference type="STRING" id="10090.ENSMUSP00000024620"/>
<dbReference type="iPTMnet" id="Q9CQS5"/>
<dbReference type="PhosphoSitePlus" id="Q9CQS5"/>
<dbReference type="jPOST" id="Q9CQS5"/>
<dbReference type="PeptideAtlas" id="Q9CQS5"/>
<dbReference type="ProteomicsDB" id="255151"/>
<dbReference type="Pumba" id="Q9CQS5"/>
<dbReference type="Antibodypedia" id="13276">
    <property type="antibodies" value="347 antibodies from 28 providers"/>
</dbReference>
<dbReference type="DNASU" id="67045"/>
<dbReference type="Ensembl" id="ENSMUST00000024620.8">
    <property type="protein sequence ID" value="ENSMUSP00000024620.7"/>
    <property type="gene ID" value="ENSMUSG00000116564.2"/>
</dbReference>
<dbReference type="GeneID" id="67045"/>
<dbReference type="KEGG" id="mmu:67045"/>
<dbReference type="UCSC" id="uc008apd.2">
    <property type="organism name" value="mouse"/>
</dbReference>
<dbReference type="AGR" id="MGI:1914295"/>
<dbReference type="CTD" id="55781"/>
<dbReference type="MGI" id="MGI:1914295">
    <property type="gene designation" value="Riok2"/>
</dbReference>
<dbReference type="VEuPathDB" id="HostDB:ENSMUSG00000116564"/>
<dbReference type="GeneTree" id="ENSGT00390000003255"/>
<dbReference type="HOGENOM" id="CLU_018693_0_3_1"/>
<dbReference type="InParanoid" id="Q9CQS5"/>
<dbReference type="OMA" id="ACPHLIA"/>
<dbReference type="OrthoDB" id="10258631at2759"/>
<dbReference type="PhylomeDB" id="Q9CQS5"/>
<dbReference type="TreeFam" id="TF321400"/>
<dbReference type="Reactome" id="R-MMU-6791226">
    <property type="pathway name" value="Major pathway of rRNA processing in the nucleolus and cytosol"/>
</dbReference>
<dbReference type="BioGRID-ORCS" id="67045">
    <property type="hits" value="13 hits in 33 CRISPR screens"/>
</dbReference>
<dbReference type="ChiTaRS" id="Riok2">
    <property type="organism name" value="mouse"/>
</dbReference>
<dbReference type="PRO" id="PR:Q9CQS5"/>
<dbReference type="Proteomes" id="UP000000589">
    <property type="component" value="Chromosome 17"/>
</dbReference>
<dbReference type="RNAct" id="Q9CQS5">
    <property type="molecule type" value="protein"/>
</dbReference>
<dbReference type="Bgee" id="ENSMUSG00000116564">
    <property type="expression patterns" value="Expressed in optic fissure and 263 other cell types or tissues"/>
</dbReference>
<dbReference type="ExpressionAtlas" id="Q9CQS5">
    <property type="expression patterns" value="baseline and differential"/>
</dbReference>
<dbReference type="GO" id="GO:0005737">
    <property type="term" value="C:cytoplasm"/>
    <property type="evidence" value="ECO:0007669"/>
    <property type="project" value="UniProtKB-SubCell"/>
</dbReference>
<dbReference type="GO" id="GO:0030688">
    <property type="term" value="C:preribosome, small subunit precursor"/>
    <property type="evidence" value="ECO:0007669"/>
    <property type="project" value="Ensembl"/>
</dbReference>
<dbReference type="GO" id="GO:0005524">
    <property type="term" value="F:ATP binding"/>
    <property type="evidence" value="ECO:0007669"/>
    <property type="project" value="UniProtKB-KW"/>
</dbReference>
<dbReference type="GO" id="GO:0046872">
    <property type="term" value="F:metal ion binding"/>
    <property type="evidence" value="ECO:0007669"/>
    <property type="project" value="UniProtKB-KW"/>
</dbReference>
<dbReference type="GO" id="GO:0106310">
    <property type="term" value="F:protein serine kinase activity"/>
    <property type="evidence" value="ECO:0007669"/>
    <property type="project" value="RHEA"/>
</dbReference>
<dbReference type="GO" id="GO:0004674">
    <property type="term" value="F:protein serine/threonine kinase activity"/>
    <property type="evidence" value="ECO:0007669"/>
    <property type="project" value="UniProtKB-KW"/>
</dbReference>
<dbReference type="GO" id="GO:0030490">
    <property type="term" value="P:maturation of SSU-rRNA"/>
    <property type="evidence" value="ECO:0007669"/>
    <property type="project" value="Ensembl"/>
</dbReference>
<dbReference type="GO" id="GO:2000208">
    <property type="term" value="P:positive regulation of ribosomal small subunit export from nucleus"/>
    <property type="evidence" value="ECO:0007669"/>
    <property type="project" value="Ensembl"/>
</dbReference>
<dbReference type="GO" id="GO:2000234">
    <property type="term" value="P:positive regulation of rRNA processing"/>
    <property type="evidence" value="ECO:0007669"/>
    <property type="project" value="Ensembl"/>
</dbReference>
<dbReference type="GO" id="GO:0046777">
    <property type="term" value="P:protein autophosphorylation"/>
    <property type="evidence" value="ECO:0000250"/>
    <property type="project" value="UniProtKB"/>
</dbReference>
<dbReference type="GO" id="GO:0030071">
    <property type="term" value="P:regulation of mitotic metaphase/anaphase transition"/>
    <property type="evidence" value="ECO:0000250"/>
    <property type="project" value="UniProtKB"/>
</dbReference>
<dbReference type="CDD" id="cd05144">
    <property type="entry name" value="RIO2_C"/>
    <property type="match status" value="1"/>
</dbReference>
<dbReference type="FunFam" id="1.10.10.10:FF:000053">
    <property type="entry name" value="Serine/threonine-protein kinase RIO2"/>
    <property type="match status" value="1"/>
</dbReference>
<dbReference type="FunFam" id="1.10.510.10:FF:000307">
    <property type="entry name" value="Serine/threonine-protein kinase RIO2"/>
    <property type="match status" value="1"/>
</dbReference>
<dbReference type="FunFam" id="3.30.200.20:FF:000052">
    <property type="entry name" value="Serine/threonine-protein kinase RIO2"/>
    <property type="match status" value="1"/>
</dbReference>
<dbReference type="Gene3D" id="3.30.200.20">
    <property type="entry name" value="Phosphorylase Kinase, domain 1"/>
    <property type="match status" value="1"/>
</dbReference>
<dbReference type="Gene3D" id="1.10.510.10">
    <property type="entry name" value="Transferase(Phosphotransferase) domain 1"/>
    <property type="match status" value="1"/>
</dbReference>
<dbReference type="Gene3D" id="1.10.10.10">
    <property type="entry name" value="Winged helix-like DNA-binding domain superfamily/Winged helix DNA-binding domain"/>
    <property type="match status" value="1"/>
</dbReference>
<dbReference type="InterPro" id="IPR011009">
    <property type="entry name" value="Kinase-like_dom_sf"/>
</dbReference>
<dbReference type="InterPro" id="IPR030484">
    <property type="entry name" value="Rio2"/>
</dbReference>
<dbReference type="InterPro" id="IPR015285">
    <property type="entry name" value="RIO2_wHTH_N"/>
</dbReference>
<dbReference type="InterPro" id="IPR018934">
    <property type="entry name" value="RIO_dom"/>
</dbReference>
<dbReference type="InterPro" id="IPR000687">
    <property type="entry name" value="RIO_kinase"/>
</dbReference>
<dbReference type="InterPro" id="IPR018935">
    <property type="entry name" value="RIO_kinase_CS"/>
</dbReference>
<dbReference type="InterPro" id="IPR036388">
    <property type="entry name" value="WH-like_DNA-bd_sf"/>
</dbReference>
<dbReference type="InterPro" id="IPR036390">
    <property type="entry name" value="WH_DNA-bd_sf"/>
</dbReference>
<dbReference type="PANTHER" id="PTHR45852">
    <property type="entry name" value="SER/THR-PROTEIN KINASE RIO2"/>
    <property type="match status" value="1"/>
</dbReference>
<dbReference type="PANTHER" id="PTHR45852:SF1">
    <property type="entry name" value="SERINE_THREONINE-PROTEIN KINASE RIO2"/>
    <property type="match status" value="1"/>
</dbReference>
<dbReference type="Pfam" id="PF01163">
    <property type="entry name" value="RIO1"/>
    <property type="match status" value="1"/>
</dbReference>
<dbReference type="Pfam" id="PF09202">
    <property type="entry name" value="Rio2_N"/>
    <property type="match status" value="1"/>
</dbReference>
<dbReference type="SMART" id="SM00090">
    <property type="entry name" value="RIO"/>
    <property type="match status" value="1"/>
</dbReference>
<dbReference type="SUPFAM" id="SSF56112">
    <property type="entry name" value="Protein kinase-like (PK-like)"/>
    <property type="match status" value="1"/>
</dbReference>
<dbReference type="SUPFAM" id="SSF46785">
    <property type="entry name" value="Winged helix' DNA-binding domain"/>
    <property type="match status" value="1"/>
</dbReference>
<dbReference type="PROSITE" id="PS01245">
    <property type="entry name" value="RIO1"/>
    <property type="match status" value="1"/>
</dbReference>
<proteinExistence type="evidence at protein level"/>